<organism>
    <name type="scientific">Oryctolagus cuniculus</name>
    <name type="common">Rabbit</name>
    <dbReference type="NCBI Taxonomy" id="9986"/>
    <lineage>
        <taxon>Eukaryota</taxon>
        <taxon>Metazoa</taxon>
        <taxon>Chordata</taxon>
        <taxon>Craniata</taxon>
        <taxon>Vertebrata</taxon>
        <taxon>Euteleostomi</taxon>
        <taxon>Mammalia</taxon>
        <taxon>Eutheria</taxon>
        <taxon>Euarchontoglires</taxon>
        <taxon>Glires</taxon>
        <taxon>Lagomorpha</taxon>
        <taxon>Leporidae</taxon>
        <taxon>Oryctolagus</taxon>
    </lineage>
</organism>
<reference key="1">
    <citation type="journal article" date="2011" name="Nature">
        <title>A high-resolution map of human evolutionary constraint using 29 mammals.</title>
        <authorList>
            <person name="Lindblad-Toh K."/>
            <person name="Garber M."/>
            <person name="Zuk O."/>
            <person name="Lin M.F."/>
            <person name="Parker B.J."/>
            <person name="Washietl S."/>
            <person name="Kheradpour P."/>
            <person name="Ernst J."/>
            <person name="Jordan G."/>
            <person name="Mauceli E."/>
            <person name="Ward L.D."/>
            <person name="Lowe C.B."/>
            <person name="Holloway A.K."/>
            <person name="Clamp M."/>
            <person name="Gnerre S."/>
            <person name="Alfoldi J."/>
            <person name="Beal K."/>
            <person name="Chang J."/>
            <person name="Clawson H."/>
            <person name="Cuff J."/>
            <person name="Di Palma F."/>
            <person name="Fitzgerald S."/>
            <person name="Flicek P."/>
            <person name="Guttman M."/>
            <person name="Hubisz M.J."/>
            <person name="Jaffe D.B."/>
            <person name="Jungreis I."/>
            <person name="Kent W.J."/>
            <person name="Kostka D."/>
            <person name="Lara M."/>
            <person name="Martins A.L."/>
            <person name="Massingham T."/>
            <person name="Moltke I."/>
            <person name="Raney B.J."/>
            <person name="Rasmussen M.D."/>
            <person name="Robinson J."/>
            <person name="Stark A."/>
            <person name="Vilella A.J."/>
            <person name="Wen J."/>
            <person name="Xie X."/>
            <person name="Zody M.C."/>
            <person name="Baldwin J."/>
            <person name="Bloom T."/>
            <person name="Chin C.W."/>
            <person name="Heiman D."/>
            <person name="Nicol R."/>
            <person name="Nusbaum C."/>
            <person name="Young S."/>
            <person name="Wilkinson J."/>
            <person name="Worley K.C."/>
            <person name="Kovar C.L."/>
            <person name="Muzny D.M."/>
            <person name="Gibbs R.A."/>
            <person name="Cree A."/>
            <person name="Dihn H.H."/>
            <person name="Fowler G."/>
            <person name="Jhangiani S."/>
            <person name="Joshi V."/>
            <person name="Lee S."/>
            <person name="Lewis L.R."/>
            <person name="Nazareth L.V."/>
            <person name="Okwuonu G."/>
            <person name="Santibanez J."/>
            <person name="Warren W.C."/>
            <person name="Mardis E.R."/>
            <person name="Weinstock G.M."/>
            <person name="Wilson R.K."/>
            <person name="Delehaunty K."/>
            <person name="Dooling D."/>
            <person name="Fronik C."/>
            <person name="Fulton L."/>
            <person name="Fulton B."/>
            <person name="Graves T."/>
            <person name="Minx P."/>
            <person name="Sodergren E."/>
            <person name="Birney E."/>
            <person name="Margulies E.H."/>
            <person name="Herrero J."/>
            <person name="Green E.D."/>
            <person name="Haussler D."/>
            <person name="Siepel A."/>
            <person name="Goldman N."/>
            <person name="Pollard K.S."/>
            <person name="Pedersen J.S."/>
            <person name="Lander E.S."/>
            <person name="Kellis M."/>
        </authorList>
    </citation>
    <scope>NUCLEOTIDE SEQUENCE [LARGE SCALE GENOMIC DNA]</scope>
    <source>
        <strain>Thorbecke</strain>
    </source>
</reference>
<reference evidence="17 18" key="2">
    <citation type="journal article" date="2015" name="Nature">
        <title>Structural basis for stop codon recognition in eukaryotes.</title>
        <authorList>
            <person name="Brown A."/>
            <person name="Shao S."/>
            <person name="Murray J."/>
            <person name="Hegde R.S."/>
            <person name="Ramakrishnan V."/>
        </authorList>
    </citation>
    <scope>STRUCTURE BY ELECTRON MICROSCOPY (3.45 ANGSTROMS) OF 2-214 OF RIBOSOME</scope>
    <scope>FUNCTION</scope>
    <scope>SUBCELLULAR LOCATION</scope>
    <scope>SUBUNIT</scope>
</reference>
<reference evidence="19 20" key="3">
    <citation type="journal article" date="2016" name="Cell">
        <title>Decoding mammalian ribosome-mRNA states by translational GTPase complexes.</title>
        <authorList>
            <person name="Shao S."/>
            <person name="Murray J."/>
            <person name="Brown A."/>
            <person name="Taunton J."/>
            <person name="Ramakrishnan V."/>
            <person name="Hegde R.S."/>
        </authorList>
    </citation>
    <scope>STRUCTURE BY ELECTRON MICROSCOPY (3.31 ANGSTROMS) OF RIBOSOME</scope>
    <scope>FUNCTION</scope>
    <scope>SUBCELLULAR LOCATION</scope>
    <scope>SUBUNIT</scope>
</reference>
<reference evidence="23" key="4">
    <citation type="journal article" date="2018" name="Cell Rep.">
        <title>tRNA translocation by the eukaryotic 80S ribosome and the impact of GTP hydrolysis.</title>
        <authorList>
            <person name="Flis J."/>
            <person name="Holm M."/>
            <person name="Rundlet E.J."/>
            <person name="Loerke J."/>
            <person name="Hilal T."/>
            <person name="Dabrowski M."/>
            <person name="Burger J."/>
            <person name="Mielke T."/>
            <person name="Blanchard S.C."/>
            <person name="Spahn C.M.T."/>
            <person name="Budkevich T.V."/>
        </authorList>
    </citation>
    <scope>STRUCTURE BY ELECTRON MICROSCOPY (3.60 ANGSTROMS) OF 3-213 OF RIBOSOME</scope>
    <scope>FUNCTION</scope>
    <scope>SUBCELLULAR LOCATION</scope>
    <scope>SUBUNIT</scope>
</reference>
<reference evidence="21 22" key="5">
    <citation type="journal article" date="2018" name="Elife">
        <title>Dual tRNA mimicry in the Cricket paralysis virus IRES uncovers an unexpected similarity with the Hepatitis C Virus IRES.</title>
        <authorList>
            <person name="Pisareva V.P."/>
            <person name="Pisarev A.V."/>
            <person name="Fernandez I.S."/>
        </authorList>
    </citation>
    <scope>STRUCTURE BY ELECTRON MICROSCOPY (3.20 ANGSTROMS) OF RIBOSOME</scope>
    <scope>SUBCELLULAR LOCATION</scope>
    <scope>SUBUNIT</scope>
</reference>
<reference evidence="26 27" key="6">
    <citation type="journal article" date="2018" name="Elife">
        <title>Structures of translationally inactive mammalian ribosomes.</title>
        <authorList>
            <person name="Brown A."/>
            <person name="Baird M.R."/>
            <person name="Yip M.C."/>
            <person name="Murray J."/>
            <person name="Shao S."/>
        </authorList>
    </citation>
    <scope>STRUCTURE BY ELECTRON MICROSCOPY (3.30 ANGSTROMS) OF RIBOSOME</scope>
    <scope>SUBCELLULAR LOCATION</scope>
    <scope>SUBUNIT</scope>
</reference>
<reference evidence="24 25" key="7">
    <citation type="journal article" date="2018" name="Mol. Cell">
        <title>ZNF598 is a quality control sensor of collided ribosomes.</title>
        <authorList>
            <person name="Juszkiewicz S."/>
            <person name="Chandrasekaran V."/>
            <person name="Lin Z."/>
            <person name="Kraatz S."/>
            <person name="Ramakrishnan V."/>
            <person name="Hegde R.S."/>
        </authorList>
    </citation>
    <scope>STRUCTURE BY ELECTRON MICROSCOPY (3.80 ANGSTROMS) OF RIBOSOME</scope>
    <scope>SUBCELLULAR LOCATION</scope>
    <scope>SUBUNIT</scope>
</reference>
<reference evidence="30 31" key="8">
    <citation type="journal article" date="2019" name="Elife">
        <title>Structural and mutational analysis of the ribosome-arresting human XBP1u.</title>
        <authorList>
            <person name="Shanmuganathan V."/>
            <person name="Schiller N."/>
            <person name="Magoulopoulou A."/>
            <person name="Cheng J."/>
            <person name="Braunger K."/>
            <person name="Cymer F."/>
            <person name="Berninghausen O."/>
            <person name="Beatrix B."/>
            <person name="Kohno K."/>
            <person name="von Heijne G."/>
            <person name="Beckmann R."/>
        </authorList>
    </citation>
    <scope>STRUCTURE BY ELECTRON MICROSCOPY (3.00 ANGSTROMS) OF 2-214 OF RIBOSOME</scope>
    <scope>SUBCELLULAR LOCATION</scope>
    <scope>SUBUNIT</scope>
</reference>
<reference evidence="28 29" key="9">
    <citation type="journal article" date="2019" name="EMBO J.">
        <title>The Israeli acute paralysis virus IRES captures host ribosomes by mimicking a ribosomal state with hybrid tRNAs.</title>
        <authorList>
            <person name="Acosta-Reyes F."/>
            <person name="Neupane R."/>
            <person name="Frank J."/>
            <person name="Fernandez I.S."/>
        </authorList>
    </citation>
    <scope>STRUCTURE BY ELECTRON MICROSCOPY (3.10 ANGSTROMS) OF RIBOSOME</scope>
    <scope>SUBCELLULAR LOCATION</scope>
    <scope>SUBUNIT</scope>
</reference>
<reference evidence="32" key="10">
    <citation type="journal article" date="2019" name="Nat. Struct. Mol. Biol.">
        <title>Mechanism of ribosome stalling during translation of a poly(A) tail.</title>
        <authorList>
            <person name="Chandrasekaran V."/>
            <person name="Juszkiewicz S."/>
            <person name="Choi J."/>
            <person name="Puglisi J.D."/>
            <person name="Brown A."/>
            <person name="Shao S."/>
            <person name="Ramakrishnan V."/>
            <person name="Hegde R.S."/>
        </authorList>
    </citation>
    <scope>STRUCTURE BY ELECTRON MICROSCOPY (2.80 ANGSTROMS) OF RIBOSOME</scope>
    <scope>SUBCELLULAR LOCATION</scope>
    <scope>SUBUNIT</scope>
</reference>
<reference evidence="33 34" key="11">
    <citation type="journal article" date="2020" name="Cell Rep.">
        <title>The Halastavi arva virus intergenic region IRES promotes translation by the simplest possible initiation mechanism.</title>
        <authorList>
            <person name="Abaeva I.S."/>
            <person name="Vicens Q."/>
            <person name="Bochler A."/>
            <person name="Soufari H."/>
            <person name="Simonetti A."/>
            <person name="Pestova T.V."/>
            <person name="Hashem Y."/>
            <person name="Hellen C.U.T."/>
        </authorList>
    </citation>
    <scope>STRUCTURE BY ELECTRON MICROSCOPY (3.49 ANGSTROMS) OF 2-103 AND 113-214 OF RIBOSOME</scope>
    <scope>SUBCELLULAR LOCATION</scope>
    <scope>SUBUNIT</scope>
</reference>
<reference evidence="35" key="12">
    <citation type="journal article" date="2023" name="Nature">
        <title>A molecular network of conserved factors keeps ribosomes dormant in the egg.</title>
        <authorList>
            <person name="Leesch F."/>
            <person name="Lorenzo-Orts L."/>
            <person name="Pribitzer C."/>
            <person name="Grishkovskaya I."/>
            <person name="Roehsner J."/>
            <person name="Chugunova A."/>
            <person name="Matzinger M."/>
            <person name="Roitinger E."/>
            <person name="Belacic K."/>
            <person name="Kandolf S."/>
            <person name="Lin T.Y."/>
            <person name="Mechtler K."/>
            <person name="Meinhart A."/>
            <person name="Haselbach D."/>
            <person name="Pauli A."/>
        </authorList>
    </citation>
    <scope>STRUCTURE BY ELECTRON MICROSCOPY (2.30 ANGSTROMS) OF RIBOSOME</scope>
    <scope>SUBCELLULAR LOCATION</scope>
    <scope>SUBUNIT</scope>
</reference>
<reference evidence="36 37" key="13">
    <citation type="journal article" date="2022" name="Mol. Cell">
        <title>Direct epitranscriptomic regulation of mammalian translation initiation through N4-acetylcytidine.</title>
        <authorList>
            <person name="Arango D."/>
            <person name="Sturgill D."/>
            <person name="Yang R."/>
            <person name="Kanai T."/>
            <person name="Bauer P."/>
            <person name="Roy J."/>
            <person name="Wang Z."/>
            <person name="Hosogane M."/>
            <person name="Schiffers S."/>
            <person name="Oberdoerffer S."/>
        </authorList>
    </citation>
    <scope>STRUCTURE BY ELECTRON MICROSCOPY (2.80 ANGSTROMS) OF 2-214 OF RIBOSOME</scope>
    <scope>SUBCELLULAR LOCATION</scope>
    <scope>SUBUNIT</scope>
</reference>
<reference evidence="38 39" key="14">
    <citation type="journal article" date="2022" name="Science">
        <title>Structure of the mammalian ribosome as it decodes the selenocysteine UGA codon.</title>
        <authorList>
            <person name="Hilal T."/>
            <person name="Killam B.Y."/>
            <person name="Grozdanovic M."/>
            <person name="Dobosz-Bartoszek M."/>
            <person name="Loerke J."/>
            <person name="Buerger J."/>
            <person name="Mielke T."/>
            <person name="Copeland P.R."/>
            <person name="Simonovic M."/>
            <person name="Spahn C.M.T."/>
        </authorList>
    </citation>
    <scope>STRUCTURE BY ELECTRON MICROSCOPY (2.80 ANGSTROMS) OF RIBOSOME</scope>
    <scope>SUBCELLULAR LOCATION</scope>
    <scope>SUBUNIT</scope>
</reference>
<dbReference type="EMBL" id="DP001061">
    <property type="protein sequence ID" value="ACK44277.1"/>
    <property type="molecule type" value="Genomic_DNA"/>
</dbReference>
<dbReference type="RefSeq" id="NP_001164845.1">
    <property type="nucleotide sequence ID" value="NM_001171374.1"/>
</dbReference>
<dbReference type="RefSeq" id="XP_069922445.1">
    <property type="nucleotide sequence ID" value="XM_070066344.1"/>
</dbReference>
<dbReference type="PDB" id="3JAG">
    <property type="method" value="EM"/>
    <property type="resolution" value="3.65 A"/>
    <property type="chains" value="I=2-214"/>
</dbReference>
<dbReference type="PDB" id="3JAH">
    <property type="method" value="EM"/>
    <property type="resolution" value="3.45 A"/>
    <property type="chains" value="I=2-214"/>
</dbReference>
<dbReference type="PDB" id="3JAI">
    <property type="method" value="EM"/>
    <property type="resolution" value="3.65 A"/>
    <property type="chains" value="I=2-214"/>
</dbReference>
<dbReference type="PDB" id="5LZS">
    <property type="method" value="EM"/>
    <property type="resolution" value="3.31 A"/>
    <property type="chains" value="I=1-214"/>
</dbReference>
<dbReference type="PDB" id="5LZT">
    <property type="method" value="EM"/>
    <property type="resolution" value="3.65 A"/>
    <property type="chains" value="I=1-214"/>
</dbReference>
<dbReference type="PDB" id="5LZU">
    <property type="method" value="EM"/>
    <property type="resolution" value="3.75 A"/>
    <property type="chains" value="I=1-214"/>
</dbReference>
<dbReference type="PDB" id="5LZV">
    <property type="method" value="EM"/>
    <property type="resolution" value="3.35 A"/>
    <property type="chains" value="I=1-214"/>
</dbReference>
<dbReference type="PDB" id="5LZW">
    <property type="method" value="EM"/>
    <property type="resolution" value="3.53 A"/>
    <property type="chains" value="I=1-214"/>
</dbReference>
<dbReference type="PDB" id="5LZX">
    <property type="method" value="EM"/>
    <property type="resolution" value="3.67 A"/>
    <property type="chains" value="I=1-214"/>
</dbReference>
<dbReference type="PDB" id="5LZY">
    <property type="method" value="EM"/>
    <property type="resolution" value="3.99 A"/>
    <property type="chains" value="I=1-214"/>
</dbReference>
<dbReference type="PDB" id="5LZZ">
    <property type="method" value="EM"/>
    <property type="resolution" value="3.47 A"/>
    <property type="chains" value="I=1-214"/>
</dbReference>
<dbReference type="PDB" id="6D90">
    <property type="method" value="EM"/>
    <property type="resolution" value="3.20 A"/>
    <property type="chains" value="I=1-214"/>
</dbReference>
<dbReference type="PDB" id="6D9J">
    <property type="method" value="EM"/>
    <property type="resolution" value="3.20 A"/>
    <property type="chains" value="I=1-214"/>
</dbReference>
<dbReference type="PDB" id="6FTG">
    <property type="method" value="EM"/>
    <property type="resolution" value="9.10 A"/>
    <property type="chains" value="I=2-214"/>
</dbReference>
<dbReference type="PDB" id="6FTI">
    <property type="method" value="EM"/>
    <property type="resolution" value="4.20 A"/>
    <property type="chains" value="I=2-214"/>
</dbReference>
<dbReference type="PDB" id="6FTJ">
    <property type="method" value="EM"/>
    <property type="resolution" value="4.70 A"/>
    <property type="chains" value="I=2-214"/>
</dbReference>
<dbReference type="PDB" id="6GZ3">
    <property type="method" value="EM"/>
    <property type="resolution" value="3.60 A"/>
    <property type="chains" value="AI=3-213"/>
</dbReference>
<dbReference type="PDB" id="6HCF">
    <property type="method" value="EM"/>
    <property type="resolution" value="3.90 A"/>
    <property type="chains" value="I3=1-214"/>
</dbReference>
<dbReference type="PDB" id="6HCJ">
    <property type="method" value="EM"/>
    <property type="resolution" value="3.80 A"/>
    <property type="chains" value="I3=1-214"/>
</dbReference>
<dbReference type="PDB" id="6HCM">
    <property type="method" value="EM"/>
    <property type="resolution" value="6.80 A"/>
    <property type="chains" value="I3=1-214"/>
</dbReference>
<dbReference type="PDB" id="6HCQ">
    <property type="method" value="EM"/>
    <property type="resolution" value="6.50 A"/>
    <property type="chains" value="I3=1-214"/>
</dbReference>
<dbReference type="PDB" id="6MTB">
    <property type="method" value="EM"/>
    <property type="resolution" value="3.60 A"/>
    <property type="chains" value="I=1-214"/>
</dbReference>
<dbReference type="PDB" id="6MTC">
    <property type="method" value="EM"/>
    <property type="resolution" value="3.40 A"/>
    <property type="chains" value="I=1-214"/>
</dbReference>
<dbReference type="PDB" id="6MTD">
    <property type="method" value="EM"/>
    <property type="resolution" value="3.30 A"/>
    <property type="chains" value="I=1-214"/>
</dbReference>
<dbReference type="PDB" id="6MTE">
    <property type="method" value="EM"/>
    <property type="resolution" value="3.40 A"/>
    <property type="chains" value="I=1-214"/>
</dbReference>
<dbReference type="PDB" id="6P5I">
    <property type="method" value="EM"/>
    <property type="resolution" value="3.10 A"/>
    <property type="chains" value="AI=1-214"/>
</dbReference>
<dbReference type="PDB" id="6P5J">
    <property type="method" value="EM"/>
    <property type="resolution" value="3.10 A"/>
    <property type="chains" value="AI=1-214"/>
</dbReference>
<dbReference type="PDB" id="6P5K">
    <property type="method" value="EM"/>
    <property type="resolution" value="3.10 A"/>
    <property type="chains" value="AI=1-214"/>
</dbReference>
<dbReference type="PDB" id="6P5N">
    <property type="method" value="EM"/>
    <property type="resolution" value="3.20 A"/>
    <property type="chains" value="AI=1-214"/>
</dbReference>
<dbReference type="PDB" id="6R5Q">
    <property type="method" value="EM"/>
    <property type="resolution" value="3.00 A"/>
    <property type="chains" value="I=2-214"/>
</dbReference>
<dbReference type="PDB" id="6R6G">
    <property type="method" value="EM"/>
    <property type="resolution" value="3.70 A"/>
    <property type="chains" value="I=2-214"/>
</dbReference>
<dbReference type="PDB" id="6R6P">
    <property type="method" value="EM"/>
    <property type="resolution" value="3.10 A"/>
    <property type="chains" value="I=2-214"/>
</dbReference>
<dbReference type="PDB" id="6R7Q">
    <property type="method" value="EM"/>
    <property type="resolution" value="3.90 A"/>
    <property type="chains" value="I=2-214"/>
</dbReference>
<dbReference type="PDB" id="6SGC">
    <property type="method" value="EM"/>
    <property type="resolution" value="2.80 A"/>
    <property type="chains" value="I2=1-214"/>
</dbReference>
<dbReference type="PDB" id="6T59">
    <property type="method" value="EM"/>
    <property type="resolution" value="3.11 A"/>
    <property type="chains" value="I3=1-214"/>
</dbReference>
<dbReference type="PDB" id="6ZVK">
    <property type="method" value="EM"/>
    <property type="resolution" value="3.49 A"/>
    <property type="chains" value="L2=2-103, X2=113-214"/>
</dbReference>
<dbReference type="PDB" id="7A01">
    <property type="method" value="EM"/>
    <property type="resolution" value="3.60 A"/>
    <property type="chains" value="L2=2-103, X2=113-214"/>
</dbReference>
<dbReference type="PDB" id="7MDZ">
    <property type="method" value="EM"/>
    <property type="resolution" value="3.20 A"/>
    <property type="chains" value="I=1-214"/>
</dbReference>
<dbReference type="PDB" id="7NFX">
    <property type="method" value="EM"/>
    <property type="resolution" value="3.20 A"/>
    <property type="chains" value="I=1-214"/>
</dbReference>
<dbReference type="PDB" id="7NWG">
    <property type="method" value="EM"/>
    <property type="resolution" value="3.80 A"/>
    <property type="chains" value="I3=1-214"/>
</dbReference>
<dbReference type="PDB" id="7NWH">
    <property type="method" value="EM"/>
    <property type="resolution" value="4.10 A"/>
    <property type="chains" value="I=1-214"/>
</dbReference>
<dbReference type="PDB" id="7NWI">
    <property type="method" value="EM"/>
    <property type="resolution" value="3.13 A"/>
    <property type="chains" value="I=1-214"/>
</dbReference>
<dbReference type="PDB" id="7O7Y">
    <property type="method" value="EM"/>
    <property type="resolution" value="2.20 A"/>
    <property type="chains" value="BI=1-214"/>
</dbReference>
<dbReference type="PDB" id="7O7Z">
    <property type="method" value="EM"/>
    <property type="resolution" value="2.40 A"/>
    <property type="chains" value="BI=1-214"/>
</dbReference>
<dbReference type="PDB" id="7O80">
    <property type="method" value="EM"/>
    <property type="resolution" value="2.90 A"/>
    <property type="chains" value="BI=1-214"/>
</dbReference>
<dbReference type="PDB" id="7O81">
    <property type="method" value="EM"/>
    <property type="resolution" value="3.10 A"/>
    <property type="chains" value="BI=1-214"/>
</dbReference>
<dbReference type="PDB" id="7OBR">
    <property type="method" value="EM"/>
    <property type="resolution" value="2.80 A"/>
    <property type="chains" value="I=1-214"/>
</dbReference>
<dbReference type="PDB" id="7OYD">
    <property type="method" value="EM"/>
    <property type="resolution" value="2.30 A"/>
    <property type="chains" value="I=1-214"/>
</dbReference>
<dbReference type="PDB" id="7QWQ">
    <property type="method" value="EM"/>
    <property type="resolution" value="2.83 A"/>
    <property type="chains" value="I=1-214"/>
</dbReference>
<dbReference type="PDB" id="7QWR">
    <property type="method" value="EM"/>
    <property type="resolution" value="2.90 A"/>
    <property type="chains" value="I=1-214"/>
</dbReference>
<dbReference type="PDB" id="7QWS">
    <property type="method" value="EM"/>
    <property type="resolution" value="3.40 A"/>
    <property type="chains" value="I=1-214"/>
</dbReference>
<dbReference type="PDB" id="7TM3">
    <property type="method" value="EM"/>
    <property type="resolution" value="3.25 A"/>
    <property type="chains" value="I=1-214"/>
</dbReference>
<dbReference type="PDB" id="7TOQ">
    <property type="method" value="EM"/>
    <property type="resolution" value="3.10 A"/>
    <property type="chains" value="AL10=2-214"/>
</dbReference>
<dbReference type="PDB" id="7TOR">
    <property type="method" value="EM"/>
    <property type="resolution" value="2.90 A"/>
    <property type="chains" value="AL10=2-214"/>
</dbReference>
<dbReference type="PDB" id="7TUT">
    <property type="method" value="EM"/>
    <property type="resolution" value="3.88 A"/>
    <property type="chains" value="I=1-214"/>
</dbReference>
<dbReference type="PDB" id="7UCJ">
    <property type="method" value="EM"/>
    <property type="resolution" value="3.10 A"/>
    <property type="chains" value="I=2-214"/>
</dbReference>
<dbReference type="PDB" id="7UCK">
    <property type="method" value="EM"/>
    <property type="resolution" value="2.80 A"/>
    <property type="chains" value="I=2-214"/>
</dbReference>
<dbReference type="PDB" id="7ZJW">
    <property type="method" value="EM"/>
    <property type="resolution" value="2.80 A"/>
    <property type="chains" value="LL=1-214"/>
</dbReference>
<dbReference type="PDB" id="7ZJX">
    <property type="method" value="EM"/>
    <property type="resolution" value="3.10 A"/>
    <property type="chains" value="LL=1-214"/>
</dbReference>
<dbReference type="PDB" id="8B5L">
    <property type="method" value="EM"/>
    <property type="resolution" value="2.86 A"/>
    <property type="chains" value="I=1-214"/>
</dbReference>
<dbReference type="PDB" id="8B6C">
    <property type="method" value="EM"/>
    <property type="resolution" value="2.79 A"/>
    <property type="chains" value="I=1-214"/>
</dbReference>
<dbReference type="PDB" id="8BHF">
    <property type="method" value="EM"/>
    <property type="resolution" value="3.10 A"/>
    <property type="chains" value="r3=2-214"/>
</dbReference>
<dbReference type="PDB" id="8BPO">
    <property type="method" value="EM"/>
    <property type="resolution" value="2.80 A"/>
    <property type="chains" value="I2=1-214"/>
</dbReference>
<dbReference type="PDB" id="8BTK">
    <property type="method" value="EM"/>
    <property type="resolution" value="3.50 A"/>
    <property type="chains" value="BI=1-214"/>
</dbReference>
<dbReference type="PDB" id="8P2K">
    <property type="method" value="EM"/>
    <property type="resolution" value="2.90 A"/>
    <property type="chains" value="BI=1-214"/>
</dbReference>
<dbReference type="PDB" id="8RJB">
    <property type="method" value="EM"/>
    <property type="resolution" value="2.69 A"/>
    <property type="chains" value="I=1-214"/>
</dbReference>
<dbReference type="PDB" id="8RJC">
    <property type="method" value="EM"/>
    <property type="resolution" value="2.90 A"/>
    <property type="chains" value="I=1-214"/>
</dbReference>
<dbReference type="PDB" id="8RJD">
    <property type="method" value="EM"/>
    <property type="resolution" value="2.79 A"/>
    <property type="chains" value="I=1-214"/>
</dbReference>
<dbReference type="PDB" id="8SCB">
    <property type="method" value="EM"/>
    <property type="resolution" value="2.50 A"/>
    <property type="chains" value="I=1-214"/>
</dbReference>
<dbReference type="PDB" id="8VFT">
    <property type="method" value="EM"/>
    <property type="resolution" value="3.30 A"/>
    <property type="chains" value="I=1-214"/>
</dbReference>
<dbReference type="PDB" id="9BDL">
    <property type="method" value="EM"/>
    <property type="resolution" value="2.80 A"/>
    <property type="chains" value="AL10=2-214"/>
</dbReference>
<dbReference type="PDB" id="9BDN">
    <property type="method" value="EM"/>
    <property type="resolution" value="3.10 A"/>
    <property type="chains" value="AL10=2-214"/>
</dbReference>
<dbReference type="PDB" id="9BDP">
    <property type="method" value="EM"/>
    <property type="resolution" value="3.70 A"/>
    <property type="chains" value="AL10=2-214"/>
</dbReference>
<dbReference type="PDB" id="9F1B">
    <property type="method" value="EM"/>
    <property type="resolution" value="3.01 A"/>
    <property type="chains" value="BI=1-214"/>
</dbReference>
<dbReference type="PDB" id="9F1C">
    <property type="method" value="EM"/>
    <property type="resolution" value="3.78 A"/>
    <property type="chains" value="BI=1-214"/>
</dbReference>
<dbReference type="PDB" id="9F1D">
    <property type="method" value="EM"/>
    <property type="resolution" value="3.26 A"/>
    <property type="chains" value="BI=1-214"/>
</dbReference>
<dbReference type="PDBsum" id="3JAG"/>
<dbReference type="PDBsum" id="3JAH"/>
<dbReference type="PDBsum" id="3JAI"/>
<dbReference type="PDBsum" id="5LZS"/>
<dbReference type="PDBsum" id="5LZT"/>
<dbReference type="PDBsum" id="5LZU"/>
<dbReference type="PDBsum" id="5LZV"/>
<dbReference type="PDBsum" id="5LZW"/>
<dbReference type="PDBsum" id="5LZX"/>
<dbReference type="PDBsum" id="5LZY"/>
<dbReference type="PDBsum" id="5LZZ"/>
<dbReference type="PDBsum" id="6D90"/>
<dbReference type="PDBsum" id="6D9J"/>
<dbReference type="PDBsum" id="6FTG"/>
<dbReference type="PDBsum" id="6FTI"/>
<dbReference type="PDBsum" id="6FTJ"/>
<dbReference type="PDBsum" id="6GZ3"/>
<dbReference type="PDBsum" id="6HCF"/>
<dbReference type="PDBsum" id="6HCJ"/>
<dbReference type="PDBsum" id="6HCM"/>
<dbReference type="PDBsum" id="6HCQ"/>
<dbReference type="PDBsum" id="6MTB"/>
<dbReference type="PDBsum" id="6MTC"/>
<dbReference type="PDBsum" id="6MTD"/>
<dbReference type="PDBsum" id="6MTE"/>
<dbReference type="PDBsum" id="6P5I"/>
<dbReference type="PDBsum" id="6P5J"/>
<dbReference type="PDBsum" id="6P5K"/>
<dbReference type="PDBsum" id="6P5N"/>
<dbReference type="PDBsum" id="6R5Q"/>
<dbReference type="PDBsum" id="6R6G"/>
<dbReference type="PDBsum" id="6R6P"/>
<dbReference type="PDBsum" id="6R7Q"/>
<dbReference type="PDBsum" id="6SGC"/>
<dbReference type="PDBsum" id="6T59"/>
<dbReference type="PDBsum" id="6ZVK"/>
<dbReference type="PDBsum" id="7A01"/>
<dbReference type="PDBsum" id="7MDZ"/>
<dbReference type="PDBsum" id="7NFX"/>
<dbReference type="PDBsum" id="7NWG"/>
<dbReference type="PDBsum" id="7NWH"/>
<dbReference type="PDBsum" id="7NWI"/>
<dbReference type="PDBsum" id="7O7Y"/>
<dbReference type="PDBsum" id="7O7Z"/>
<dbReference type="PDBsum" id="7O80"/>
<dbReference type="PDBsum" id="7O81"/>
<dbReference type="PDBsum" id="7OBR"/>
<dbReference type="PDBsum" id="7OYD"/>
<dbReference type="PDBsum" id="7QWQ"/>
<dbReference type="PDBsum" id="7QWR"/>
<dbReference type="PDBsum" id="7QWS"/>
<dbReference type="PDBsum" id="7TM3"/>
<dbReference type="PDBsum" id="7TOQ"/>
<dbReference type="PDBsum" id="7TOR"/>
<dbReference type="PDBsum" id="7TUT"/>
<dbReference type="PDBsum" id="7UCJ"/>
<dbReference type="PDBsum" id="7UCK"/>
<dbReference type="PDBsum" id="7ZJW"/>
<dbReference type="PDBsum" id="7ZJX"/>
<dbReference type="PDBsum" id="8B5L"/>
<dbReference type="PDBsum" id="8B6C"/>
<dbReference type="PDBsum" id="8BHF"/>
<dbReference type="PDBsum" id="8BPO"/>
<dbReference type="PDBsum" id="8BTK"/>
<dbReference type="PDBsum" id="8P2K"/>
<dbReference type="PDBsum" id="8RJB"/>
<dbReference type="PDBsum" id="8RJC"/>
<dbReference type="PDBsum" id="8RJD"/>
<dbReference type="PDBsum" id="8SCB"/>
<dbReference type="PDBsum" id="8VFT"/>
<dbReference type="PDBsum" id="9BDL"/>
<dbReference type="PDBsum" id="9BDN"/>
<dbReference type="PDBsum" id="9BDP"/>
<dbReference type="PDBsum" id="9F1B"/>
<dbReference type="PDBsum" id="9F1C"/>
<dbReference type="PDBsum" id="9F1D"/>
<dbReference type="EMDB" id="EMD-0098"/>
<dbReference type="EMDB" id="EMD-0099"/>
<dbReference type="EMDB" id="EMD-0100"/>
<dbReference type="EMDB" id="EMD-0192"/>
<dbReference type="EMDB" id="EMD-0194"/>
<dbReference type="EMDB" id="EMD-0195"/>
<dbReference type="EMDB" id="EMD-0197"/>
<dbReference type="EMDB" id="EMD-10181"/>
<dbReference type="EMDB" id="EMD-10380"/>
<dbReference type="EMDB" id="EMD-11459"/>
<dbReference type="EMDB" id="EMD-11590"/>
<dbReference type="EMDB" id="EMD-12303"/>
<dbReference type="EMDB" id="EMD-12631"/>
<dbReference type="EMDB" id="EMD-12632"/>
<dbReference type="EMDB" id="EMD-12633"/>
<dbReference type="EMDB" id="EMD-12756"/>
<dbReference type="EMDB" id="EMD-12757"/>
<dbReference type="EMDB" id="EMD-12758"/>
<dbReference type="EMDB" id="EMD-12759"/>
<dbReference type="EMDB" id="EMD-12801"/>
<dbReference type="EMDB" id="EMD-13114"/>
<dbReference type="EMDB" id="EMD-14191"/>
<dbReference type="EMDB" id="EMD-14192"/>
<dbReference type="EMDB" id="EMD-14193"/>
<dbReference type="EMDB" id="EMD-14751"/>
<dbReference type="EMDB" id="EMD-14752"/>
<dbReference type="EMDB" id="EMD-15860"/>
<dbReference type="EMDB" id="EMD-15863"/>
<dbReference type="EMDB" id="EMD-16052"/>
<dbReference type="EMDB" id="EMD-16155"/>
<dbReference type="EMDB" id="EMD-16232"/>
<dbReference type="EMDB" id="EMD-17367"/>
<dbReference type="EMDB" id="EMD-19195"/>
<dbReference type="EMDB" id="EMD-19197"/>
<dbReference type="EMDB" id="EMD-19198"/>
<dbReference type="EMDB" id="EMD-20255"/>
<dbReference type="EMDB" id="EMD-20256"/>
<dbReference type="EMDB" id="EMD-20257"/>
<dbReference type="EMDB" id="EMD-20258"/>
<dbReference type="EMDB" id="EMD-23785"/>
<dbReference type="EMDB" id="EMD-25994"/>
<dbReference type="EMDB" id="EMD-26035"/>
<dbReference type="EMDB" id="EMD-26036"/>
<dbReference type="EMDB" id="EMD-26133"/>
<dbReference type="EMDB" id="EMD-26444"/>
<dbReference type="EMDB" id="EMD-26445"/>
<dbReference type="EMDB" id="EMD-40344"/>
<dbReference type="EMDB" id="EMD-4130"/>
<dbReference type="EMDB" id="EMD-4131"/>
<dbReference type="EMDB" id="EMD-4132"/>
<dbReference type="EMDB" id="EMD-4133"/>
<dbReference type="EMDB" id="EMD-4134"/>
<dbReference type="EMDB" id="EMD-4135"/>
<dbReference type="EMDB" id="EMD-4136"/>
<dbReference type="EMDB" id="EMD-4137"/>
<dbReference type="EMDB" id="EMD-4300"/>
<dbReference type="EMDB" id="EMD-4317"/>
<dbReference type="EMDB" id="EMD-43189"/>
<dbReference type="EMDB" id="EMD-44461"/>
<dbReference type="EMDB" id="EMD-44463"/>
<dbReference type="EMDB" id="EMD-44464"/>
<dbReference type="EMDB" id="EMD-4729"/>
<dbReference type="EMDB" id="EMD-4735"/>
<dbReference type="EMDB" id="EMD-4737"/>
<dbReference type="EMDB" id="EMD-4745"/>
<dbReference type="EMDB" id="EMD-50124"/>
<dbReference type="EMDB" id="EMD-50125"/>
<dbReference type="EMDB" id="EMD-50126"/>
<dbReference type="EMDB" id="EMD-7834"/>
<dbReference type="EMDB" id="EMD-7836"/>
<dbReference type="EMDB" id="EMD-9237"/>
<dbReference type="EMDB" id="EMD-9239"/>
<dbReference type="EMDB" id="EMD-9240"/>
<dbReference type="EMDB" id="EMD-9242"/>
<dbReference type="SMR" id="B7NZQ2"/>
<dbReference type="IntAct" id="B7NZQ2">
    <property type="interactions" value="1"/>
</dbReference>
<dbReference type="PaxDb" id="9986-ENSOCUP00000013674"/>
<dbReference type="Ensembl" id="ENSOCUT00000015915.4">
    <property type="protein sequence ID" value="ENSOCUP00000013674.2"/>
    <property type="gene ID" value="ENSOCUG00000015919.4"/>
</dbReference>
<dbReference type="GeneID" id="100328757"/>
<dbReference type="KEGG" id="ocu:100328757"/>
<dbReference type="CTD" id="6134"/>
<dbReference type="eggNOG" id="KOG0857">
    <property type="taxonomic scope" value="Eukaryota"/>
</dbReference>
<dbReference type="GeneTree" id="ENSGT00390000003897"/>
<dbReference type="HOGENOM" id="CLU_084051_0_0_1"/>
<dbReference type="OMA" id="HHVIREN"/>
<dbReference type="OrthoDB" id="9543396at2759"/>
<dbReference type="TreeFam" id="TF300082"/>
<dbReference type="Proteomes" id="UP000001811">
    <property type="component" value="Unplaced"/>
</dbReference>
<dbReference type="Bgee" id="ENSOCUG00000015919">
    <property type="expression patterns" value="Expressed in upper lobe of left lung and 15 other cell types or tissues"/>
</dbReference>
<dbReference type="GO" id="GO:0022625">
    <property type="term" value="C:cytosolic large ribosomal subunit"/>
    <property type="evidence" value="ECO:0007669"/>
    <property type="project" value="UniProtKB-ARBA"/>
</dbReference>
<dbReference type="GO" id="GO:0003735">
    <property type="term" value="F:structural constituent of ribosome"/>
    <property type="evidence" value="ECO:0007669"/>
    <property type="project" value="InterPro"/>
</dbReference>
<dbReference type="GO" id="GO:0006417">
    <property type="term" value="P:regulation of translation"/>
    <property type="evidence" value="ECO:0007669"/>
    <property type="project" value="UniProtKB-KW"/>
</dbReference>
<dbReference type="GO" id="GO:0006412">
    <property type="term" value="P:translation"/>
    <property type="evidence" value="ECO:0007669"/>
    <property type="project" value="InterPro"/>
</dbReference>
<dbReference type="CDD" id="cd01433">
    <property type="entry name" value="Ribosomal_L16_L10e"/>
    <property type="match status" value="1"/>
</dbReference>
<dbReference type="FunFam" id="3.30.60.300:FF:000001">
    <property type="entry name" value="60S ribosomal protein L10"/>
    <property type="match status" value="1"/>
</dbReference>
<dbReference type="FunFam" id="3.90.1170.10:FF:000002">
    <property type="entry name" value="60S ribosomal protein L10"/>
    <property type="match status" value="1"/>
</dbReference>
<dbReference type="Gene3D" id="3.30.60.300">
    <property type="match status" value="1"/>
</dbReference>
<dbReference type="Gene3D" id="3.90.1170.10">
    <property type="entry name" value="Ribosomal protein L10e/L16"/>
    <property type="match status" value="1"/>
</dbReference>
<dbReference type="InterPro" id="IPR047873">
    <property type="entry name" value="Ribosomal_uL16"/>
</dbReference>
<dbReference type="InterPro" id="IPR018255">
    <property type="entry name" value="Ribosomal_uL16_CS_euk_arc"/>
</dbReference>
<dbReference type="InterPro" id="IPR016180">
    <property type="entry name" value="Ribosomal_uL16_dom"/>
</dbReference>
<dbReference type="InterPro" id="IPR001197">
    <property type="entry name" value="Ribosomal_uL16_euk_arch"/>
</dbReference>
<dbReference type="InterPro" id="IPR036920">
    <property type="entry name" value="Ribosomal_uL16_sf"/>
</dbReference>
<dbReference type="NCBIfam" id="NF003239">
    <property type="entry name" value="PRK04199.1-4"/>
    <property type="match status" value="1"/>
</dbReference>
<dbReference type="NCBIfam" id="TIGR00279">
    <property type="entry name" value="uL16_euk_arch"/>
    <property type="match status" value="1"/>
</dbReference>
<dbReference type="PANTHER" id="PTHR11726">
    <property type="entry name" value="60S RIBOSOMAL PROTEIN L10"/>
    <property type="match status" value="1"/>
</dbReference>
<dbReference type="Pfam" id="PF00252">
    <property type="entry name" value="Ribosomal_L16"/>
    <property type="match status" value="1"/>
</dbReference>
<dbReference type="PIRSF" id="PIRSF005590">
    <property type="entry name" value="Ribosomal_L10"/>
    <property type="match status" value="1"/>
</dbReference>
<dbReference type="SUPFAM" id="SSF54686">
    <property type="entry name" value="Ribosomal protein L16p/L10e"/>
    <property type="match status" value="1"/>
</dbReference>
<dbReference type="PROSITE" id="PS01257">
    <property type="entry name" value="RIBOSOMAL_L10E"/>
    <property type="match status" value="1"/>
</dbReference>
<feature type="initiator methionine" description="Removed" evidence="1">
    <location>
        <position position="1"/>
    </location>
</feature>
<feature type="chain" id="PRO_0000460097" description="Large ribosomal subunit protein uL16">
    <location>
        <begin position="2"/>
        <end position="214"/>
    </location>
</feature>
<feature type="modified residue" description="Citrulline" evidence="2">
    <location>
        <position position="32"/>
    </location>
</feature>
<feature type="cross-link" description="Glycyl lysine isopeptide (Lys-Gly) (interchain with G-Cter in SUMO2)" evidence="1">
    <location>
        <position position="175"/>
    </location>
</feature>
<feature type="cross-link" description="Glycyl lysine isopeptide (Lys-Gly) (interchain with G-Cter in ubiquitin)" evidence="1">
    <location>
        <position position="188"/>
    </location>
</feature>
<evidence type="ECO:0000250" key="1">
    <source>
        <dbReference type="UniProtKB" id="P27635"/>
    </source>
</evidence>
<evidence type="ECO:0000250" key="2">
    <source>
        <dbReference type="UniProtKB" id="Q6ZWV3"/>
    </source>
</evidence>
<evidence type="ECO:0000269" key="3">
    <source>
    </source>
</evidence>
<evidence type="ECO:0000269" key="4">
    <source>
    </source>
</evidence>
<evidence type="ECO:0000269" key="5">
    <source>
    </source>
</evidence>
<evidence type="ECO:0000269" key="6">
    <source>
    </source>
</evidence>
<evidence type="ECO:0000269" key="7">
    <source>
    </source>
</evidence>
<evidence type="ECO:0000269" key="8">
    <source>
    </source>
</evidence>
<evidence type="ECO:0000269" key="9">
    <source>
    </source>
</evidence>
<evidence type="ECO:0000269" key="10">
    <source>
    </source>
</evidence>
<evidence type="ECO:0000269" key="11">
    <source>
    </source>
</evidence>
<evidence type="ECO:0000269" key="12">
    <source>
    </source>
</evidence>
<evidence type="ECO:0000269" key="13">
    <source>
    </source>
</evidence>
<evidence type="ECO:0000269" key="14">
    <source>
    </source>
</evidence>
<evidence type="ECO:0000269" key="15">
    <source>
    </source>
</evidence>
<evidence type="ECO:0000305" key="16"/>
<evidence type="ECO:0007744" key="17">
    <source>
        <dbReference type="PDB" id="3JAG"/>
    </source>
</evidence>
<evidence type="ECO:0007744" key="18">
    <source>
        <dbReference type="PDB" id="3JAH"/>
    </source>
</evidence>
<evidence type="ECO:0007744" key="19">
    <source>
        <dbReference type="PDB" id="5LZS"/>
    </source>
</evidence>
<evidence type="ECO:0007744" key="20">
    <source>
        <dbReference type="PDB" id="5LZT"/>
    </source>
</evidence>
<evidence type="ECO:0007744" key="21">
    <source>
        <dbReference type="PDB" id="6D90"/>
    </source>
</evidence>
<evidence type="ECO:0007744" key="22">
    <source>
        <dbReference type="PDB" id="6D9J"/>
    </source>
</evidence>
<evidence type="ECO:0007744" key="23">
    <source>
        <dbReference type="PDB" id="6GZ3"/>
    </source>
</evidence>
<evidence type="ECO:0007744" key="24">
    <source>
        <dbReference type="PDB" id="6HCF"/>
    </source>
</evidence>
<evidence type="ECO:0007744" key="25">
    <source>
        <dbReference type="PDB" id="6HCJ"/>
    </source>
</evidence>
<evidence type="ECO:0007744" key="26">
    <source>
        <dbReference type="PDB" id="6MTB"/>
    </source>
</evidence>
<evidence type="ECO:0007744" key="27">
    <source>
        <dbReference type="PDB" id="6MTC"/>
    </source>
</evidence>
<evidence type="ECO:0007744" key="28">
    <source>
        <dbReference type="PDB" id="6P5I"/>
    </source>
</evidence>
<evidence type="ECO:0007744" key="29">
    <source>
        <dbReference type="PDB" id="6P5J"/>
    </source>
</evidence>
<evidence type="ECO:0007744" key="30">
    <source>
        <dbReference type="PDB" id="6R5Q"/>
    </source>
</evidence>
<evidence type="ECO:0007744" key="31">
    <source>
        <dbReference type="PDB" id="6R6G"/>
    </source>
</evidence>
<evidence type="ECO:0007744" key="32">
    <source>
        <dbReference type="PDB" id="6SGC"/>
    </source>
</evidence>
<evidence type="ECO:0007744" key="33">
    <source>
        <dbReference type="PDB" id="6ZVK"/>
    </source>
</evidence>
<evidence type="ECO:0007744" key="34">
    <source>
        <dbReference type="PDB" id="7A01"/>
    </source>
</evidence>
<evidence type="ECO:0007744" key="35">
    <source>
        <dbReference type="PDB" id="7OYD"/>
    </source>
</evidence>
<evidence type="ECO:0007744" key="36">
    <source>
        <dbReference type="PDB" id="7UCJ"/>
    </source>
</evidence>
<evidence type="ECO:0007744" key="37">
    <source>
        <dbReference type="PDB" id="7UCK"/>
    </source>
</evidence>
<evidence type="ECO:0007744" key="38">
    <source>
        <dbReference type="PDB" id="7ZJW"/>
    </source>
</evidence>
<evidence type="ECO:0007744" key="39">
    <source>
        <dbReference type="PDB" id="7ZJX"/>
    </source>
</evidence>
<sequence length="214" mass="24590">MGRRPARCYRYCKNKPYPKSRFCRGVPDAKIRIFDLGRKKAKVDEFPLCGHMVSDEYEQLSSEALEAARICANKYMVKSCGKDGFHIRVRLHPFHVIRINKMLSCAGADRLQTGMRGAFGKPQGTVARVHIGQVIMSIRTKLQNKEHVVEALRRAKFKFPGRQKIHISKKWGFTKFNADEFEDMVAEKRLIPDGCGVKYIPNRGPLDKWRALHS</sequence>
<proteinExistence type="evidence at protein level"/>
<accession>B7NZQ2</accession>
<comment type="function">
    <text evidence="1 3 4 8">Component of the large ribosomal subunit (PubMed:26245381, PubMed:27863242, PubMed:30517857). Plays a role in the formation of actively translating ribosomes (By similarity). May play a role in the embryonic brain development (By similarity).</text>
</comment>
<comment type="subunit">
    <text evidence="3 4 5 6 7 8 9 10 11 12 13 14 15">Component of the large ribosomal subunit. Mature ribosomes consist of a small (40S) and a large (60S) subunit (PubMed:26245381, PubMed:27863242, PubMed:29856316, PubMed:30293783, PubMed:30355441, PubMed:30517857, PubMed:31246176, PubMed:31609474, PubMed:31768042, PubMed:33296660, PubMed:35679869, PubMed:35709277, PubMed:36653451). The 40S subunit contains about 33 different proteins and 1 molecule of RNA (18S) (PubMed:26245381, PubMed:27863242, PubMed:29856316, PubMed:30293783, PubMed:30355441, PubMed:30517857, PubMed:31246176, PubMed:31609474, PubMed:31768042, PubMed:33296660, PubMed:35679869, PubMed:35709277, PubMed:36653451). The 60S subunit contains about 49 different proteins and 3 molecules of RNA (28S, 5.8S and 5S) (PubMed:26245381, PubMed:27863242, PubMed:29856316, PubMed:30293783, PubMed:30355441, PubMed:30517857, PubMed:31246176, PubMed:31609474, PubMed:31768042, PubMed:33296660, PubMed:35679869, PubMed:35709277, PubMed:36653451).</text>
</comment>
<comment type="subcellular location">
    <subcellularLocation>
        <location evidence="3 4 5 6 7 8 9 10 11 12 13 14 15">Cytoplasm</location>
    </subcellularLocation>
</comment>
<comment type="PTM">
    <text evidence="2">Citrullinated by PADI4.</text>
</comment>
<comment type="PTM">
    <text evidence="2">Ufmylated by UFL1.</text>
</comment>
<comment type="similarity">
    <text evidence="16">Belongs to the universal ribosomal protein uL16 family.</text>
</comment>
<name>RL10_RABIT</name>
<keyword id="KW-0002">3D-structure</keyword>
<keyword id="KW-0164">Citrullination</keyword>
<keyword id="KW-0963">Cytoplasm</keyword>
<keyword id="KW-0217">Developmental protein</keyword>
<keyword id="KW-1017">Isopeptide bond</keyword>
<keyword id="KW-1185">Reference proteome</keyword>
<keyword id="KW-0687">Ribonucleoprotein</keyword>
<keyword id="KW-0689">Ribosomal protein</keyword>
<keyword id="KW-0832">Ubl conjugation</keyword>
<protein>
    <recommendedName>
        <fullName>Large ribosomal subunit protein uL16</fullName>
    </recommendedName>
    <alternativeName>
        <fullName>60S ribosomal protein L10</fullName>
    </alternativeName>
    <alternativeName>
        <fullName>Ribosomal protein L10</fullName>
    </alternativeName>
</protein>
<gene>
    <name type="primary">RPL10</name>
</gene>